<proteinExistence type="inferred from homology"/>
<accession>Q82616</accession>
<accession>Q0GNB1</accession>
<accession>Q5I5X2</accession>
<gene>
    <name evidence="1" type="primary">N</name>
    <name type="ORF">6</name>
</gene>
<name>NCAP_IBVM</name>
<evidence type="ECO:0000255" key="1">
    <source>
        <dbReference type="HAMAP-Rule" id="MF_04097"/>
    </source>
</evidence>
<evidence type="ECO:0000255" key="2">
    <source>
        <dbReference type="PROSITE-ProRule" id="PRU01276"/>
    </source>
</evidence>
<evidence type="ECO:0000255" key="3">
    <source>
        <dbReference type="PROSITE-ProRule" id="PRU01277"/>
    </source>
</evidence>
<evidence type="ECO:0000256" key="4">
    <source>
        <dbReference type="SAM" id="MobiDB-lite"/>
    </source>
</evidence>
<comment type="function">
    <text evidence="1">Packages the positive strand viral genome RNA into a helical ribonucleocapsid (RNP) and plays a fundamental role during virion assembly through its interactions with the viral genome and membrane protein M. Plays an important role in enhancing the efficiency of subgenomic viral RNA transcription as well as viral replication.</text>
</comment>
<comment type="subunit">
    <text evidence="1">Homooligomer. Both monomeric and oligomeric forms interact with RNA. Interacts with protein M. Interacts with NSP3; this interaction serves to tether the genome to the newly translated replicase-transcriptase complex at a very early stage of infection.</text>
</comment>
<comment type="subcellular location">
    <subcellularLocation>
        <location evidence="1">Virion</location>
    </subcellularLocation>
    <subcellularLocation>
        <location evidence="1">Host endoplasmic reticulum-Golgi intermediate compartment</location>
    </subcellularLocation>
    <subcellularLocation>
        <location evidence="1">Host Golgi apparatus</location>
    </subcellularLocation>
    <text evidence="1">Located inside the virion, complexed with the viral RNA. Probably associates with ER-derived membranes where it participates in viral RNA synthesis and virus budding.</text>
</comment>
<comment type="PTM">
    <text evidence="1">ADP-ribosylated. The ADP-ribosylation is retained in the virion during infection.</text>
</comment>
<comment type="PTM">
    <text evidence="1">Phosphorylated on serine and threonine residues.</text>
</comment>
<comment type="similarity">
    <text evidence="1">Belongs to the gammacoronavirus nucleocapsid protein family.</text>
</comment>
<dbReference type="EMBL" id="M28566">
    <property type="protein sequence ID" value="AAA46221.1"/>
    <property type="molecule type" value="Genomic_RNA"/>
</dbReference>
<dbReference type="EMBL" id="DQ834384">
    <property type="protein sequence ID" value="ABI26430.1"/>
    <property type="molecule type" value="Genomic_RNA"/>
</dbReference>
<dbReference type="EMBL" id="AY851295">
    <property type="protein sequence ID" value="AAW33793.1"/>
    <property type="molecule type" value="Genomic_RNA"/>
</dbReference>
<dbReference type="SMR" id="Q82616"/>
<dbReference type="Proteomes" id="UP000007642">
    <property type="component" value="Genome"/>
</dbReference>
<dbReference type="Proteomes" id="UP000096468">
    <property type="component" value="Genome"/>
</dbReference>
<dbReference type="GO" id="GO:0044172">
    <property type="term" value="C:host cell endoplasmic reticulum-Golgi intermediate compartment"/>
    <property type="evidence" value="ECO:0007669"/>
    <property type="project" value="UniProtKB-SubCell"/>
</dbReference>
<dbReference type="GO" id="GO:0044177">
    <property type="term" value="C:host cell Golgi apparatus"/>
    <property type="evidence" value="ECO:0007669"/>
    <property type="project" value="UniProtKB-SubCell"/>
</dbReference>
<dbReference type="GO" id="GO:1990904">
    <property type="term" value="C:ribonucleoprotein complex"/>
    <property type="evidence" value="ECO:0007669"/>
    <property type="project" value="UniProtKB-KW"/>
</dbReference>
<dbReference type="GO" id="GO:0019013">
    <property type="term" value="C:viral nucleocapsid"/>
    <property type="evidence" value="ECO:0007669"/>
    <property type="project" value="UniProtKB-UniRule"/>
</dbReference>
<dbReference type="GO" id="GO:0003723">
    <property type="term" value="F:RNA binding"/>
    <property type="evidence" value="ECO:0007669"/>
    <property type="project" value="UniProtKB-UniRule"/>
</dbReference>
<dbReference type="CDD" id="cd21595">
    <property type="entry name" value="CoV_N-CTD"/>
    <property type="match status" value="1"/>
</dbReference>
<dbReference type="CDD" id="cd21554">
    <property type="entry name" value="CoV_N-NTD"/>
    <property type="match status" value="1"/>
</dbReference>
<dbReference type="HAMAP" id="MF_04097">
    <property type="entry name" value="GAMMA_CORONA_NCAP"/>
    <property type="match status" value="1"/>
</dbReference>
<dbReference type="InterPro" id="IPR044344">
    <property type="entry name" value="N_prot_C_CoV"/>
</dbReference>
<dbReference type="InterPro" id="IPR044345">
    <property type="entry name" value="N_prot_N_CoV"/>
</dbReference>
<dbReference type="InterPro" id="IPR042547">
    <property type="entry name" value="NCAP_gCoV"/>
</dbReference>
<dbReference type="InterPro" id="IPR001218">
    <property type="entry name" value="Nucleocap_CoV"/>
</dbReference>
<dbReference type="InterPro" id="IPR037179">
    <property type="entry name" value="Nucleocapsid_C"/>
</dbReference>
<dbReference type="InterPro" id="IPR037195">
    <property type="entry name" value="Nucleocapsid_N"/>
</dbReference>
<dbReference type="Pfam" id="PF00937">
    <property type="entry name" value="CoV_nucleocap"/>
    <property type="match status" value="1"/>
</dbReference>
<dbReference type="PIRSF" id="PIRSF003888">
    <property type="entry name" value="Corona_nucleocap"/>
    <property type="match status" value="1"/>
</dbReference>
<dbReference type="SUPFAM" id="SSF110304">
    <property type="entry name" value="Coronavirus RNA-binding domain"/>
    <property type="match status" value="1"/>
</dbReference>
<dbReference type="SUPFAM" id="SSF103068">
    <property type="entry name" value="Nucleocapsid protein dimerization domain"/>
    <property type="match status" value="1"/>
</dbReference>
<dbReference type="PROSITE" id="PS51929">
    <property type="entry name" value="COV_N_CTD"/>
    <property type="match status" value="1"/>
</dbReference>
<dbReference type="PROSITE" id="PS51928">
    <property type="entry name" value="COV_N_NTD"/>
    <property type="match status" value="1"/>
</dbReference>
<organism>
    <name type="scientific">Avian infectious bronchitis virus (strain M41)</name>
    <name type="common">IBV</name>
    <dbReference type="NCBI Taxonomy" id="11127"/>
    <lineage>
        <taxon>Viruses</taxon>
        <taxon>Riboviria</taxon>
        <taxon>Orthornavirae</taxon>
        <taxon>Pisuviricota</taxon>
        <taxon>Pisoniviricetes</taxon>
        <taxon>Nidovirales</taxon>
        <taxon>Cornidovirineae</taxon>
        <taxon>Coronaviridae</taxon>
        <taxon>Orthocoronavirinae</taxon>
        <taxon>Gammacoronavirus</taxon>
        <taxon>Igacovirus</taxon>
        <taxon>Avian coronavirus</taxon>
    </lineage>
</organism>
<protein>
    <recommendedName>
        <fullName evidence="1">Nucleoprotein</fullName>
    </recommendedName>
    <alternativeName>
        <fullName evidence="1">Nucleocapsid protein</fullName>
        <shortName evidence="1">NC</shortName>
        <shortName evidence="1">Protein N</shortName>
    </alternativeName>
</protein>
<organismHost>
    <name type="scientific">Gallus gallus</name>
    <name type="common">Chicken</name>
    <dbReference type="NCBI Taxonomy" id="9031"/>
</organismHost>
<keyword id="KW-0013">ADP-ribosylation</keyword>
<keyword id="KW-1015">Disulfide bond</keyword>
<keyword id="KW-1040">Host Golgi apparatus</keyword>
<keyword id="KW-0597">Phosphoprotein</keyword>
<keyword id="KW-0687">Ribonucleoprotein</keyword>
<keyword id="KW-0694">RNA-binding</keyword>
<keyword id="KW-0804">Transcription</keyword>
<keyword id="KW-0805">Transcription regulation</keyword>
<keyword id="KW-0543">Viral nucleoprotein</keyword>
<keyword id="KW-0946">Virion</keyword>
<reference key="1">
    <citation type="journal article" date="1985" name="J. Gen. Virol.">
        <title>Sequences of the nucleocapsid genes from two strains of avian infectious bronchitis virus.</title>
        <authorList>
            <person name="Boursnell M.E.G."/>
            <person name="Binns M.M."/>
            <person name="Foulds I.J."/>
            <person name="Brown T.D.K."/>
        </authorList>
    </citation>
    <scope>NUCLEOTIDE SEQUENCE [GENOMIC RNA]</scope>
</reference>
<reference key="2">
    <citation type="submission" date="2006-06" db="EMBL/GenBank/DDBJ databases">
        <title>Avian infectious bronchitis virus strain M41.</title>
        <authorList>
            <person name="Mondal S.P."/>
            <person name="Buckles E.L."/>
        </authorList>
    </citation>
    <scope>NUCLEOTIDE SEQUENCE [GENOMIC RNA]</scope>
</reference>
<reference key="3">
    <citation type="journal article" date="2006" name="J. Virol. Methods">
        <title>Development and evaluation of a real-time Taqman RT-PCR assay for the detection of infectious bronchitis virus from infected chickens.</title>
        <authorList>
            <person name="Callison S.A."/>
            <person name="Hilt D.A."/>
            <person name="Boynton T.O."/>
            <person name="Sample B.F."/>
            <person name="Robison R."/>
            <person name="Swayne D.E."/>
            <person name="Jackwood M.W."/>
        </authorList>
    </citation>
    <scope>NUCLEOTIDE SEQUENCE [GENOMIC RNA]</scope>
</reference>
<sequence length="409" mass="45047">MASGKATGKTDAPAPVIKLGGPKPPKVGSSGNASWFQAIKANKLNIPPPKFEGSGVPDNENLKSSQQHGYWRRQATFKPGKGGRKPVPDAWYFYYTGTGPAANLNWGDSQDGIVWVAGKGADTKFRSNQGTRDSDKFDQYPLRFSDGGPDGNFRWDFIPLNGGRSGRSTAASSAASSRAPSREVSRGRRSGSEDDLIARAARIIQDQQKKGSRITKAKADEMAHRRYCKRTIPPNYKVDQVFGPRTKGKEGNFGDDKMNEEGIKDGRVTAMLNLVPSSHACLFGSRVTPKLQPDGLHLKFEFTTVVPRDDPQFDNYVKICDQCVDGVGTRPKDDEPRPKSRSSSRPATRGNSPAPRQQRPKKEKKPKKHDDEVDKALTSDEERNNAQLEFYDEPKVINWGDAALGENEL</sequence>
<feature type="chain" id="PRO_0000105985" description="Nucleoprotein">
    <location>
        <begin position="1"/>
        <end position="409"/>
    </location>
</feature>
<feature type="domain" description="CoV N NTD" evidence="2">
    <location>
        <begin position="31"/>
        <end position="156"/>
    </location>
</feature>
<feature type="domain" description="CoV N CTD" evidence="3">
    <location>
        <begin position="215"/>
        <end position="331"/>
    </location>
</feature>
<feature type="region of interest" description="Disordered" evidence="4">
    <location>
        <begin position="1"/>
        <end position="32"/>
    </location>
</feature>
<feature type="region of interest" description="RNA-binding" evidence="1">
    <location>
        <begin position="29"/>
        <end position="160"/>
    </location>
</feature>
<feature type="region of interest" description="Disordered" evidence="4">
    <location>
        <begin position="46"/>
        <end position="68"/>
    </location>
</feature>
<feature type="region of interest" description="Disordered" evidence="4">
    <location>
        <begin position="164"/>
        <end position="196"/>
    </location>
</feature>
<feature type="region of interest" description="Dimerization" evidence="1">
    <location>
        <begin position="226"/>
        <end position="333"/>
    </location>
</feature>
<feature type="region of interest" description="Disordered" evidence="4">
    <location>
        <begin position="238"/>
        <end position="258"/>
    </location>
</feature>
<feature type="region of interest" description="Disordered" evidence="4">
    <location>
        <begin position="326"/>
        <end position="409"/>
    </location>
</feature>
<feature type="compositionally biased region" description="Low complexity" evidence="4">
    <location>
        <begin position="15"/>
        <end position="31"/>
    </location>
</feature>
<feature type="compositionally biased region" description="Low complexity" evidence="4">
    <location>
        <begin position="166"/>
        <end position="179"/>
    </location>
</feature>
<feature type="compositionally biased region" description="Basic and acidic residues" evidence="4">
    <location>
        <begin position="180"/>
        <end position="192"/>
    </location>
</feature>
<feature type="compositionally biased region" description="Basic and acidic residues" evidence="4">
    <location>
        <begin position="247"/>
        <end position="258"/>
    </location>
</feature>
<feature type="compositionally biased region" description="Basic residues" evidence="4">
    <location>
        <begin position="358"/>
        <end position="367"/>
    </location>
</feature>
<feature type="compositionally biased region" description="Basic and acidic residues" evidence="4">
    <location>
        <begin position="368"/>
        <end position="384"/>
    </location>
</feature>
<feature type="modified residue" description="Phosphoserine; by host" evidence="1">
    <location>
        <position position="190"/>
    </location>
</feature>
<feature type="modified residue" description="Phosphoserine; by host" evidence="1">
    <location>
        <position position="192"/>
    </location>
</feature>
<feature type="modified residue" description="Phosphothreonine; by host" evidence="1">
    <location>
        <position position="378"/>
    </location>
</feature>
<feature type="modified residue" description="Phosphoserine; by host" evidence="1">
    <location>
        <position position="379"/>
    </location>
</feature>
<feature type="disulfide bond" evidence="1">
    <location>
        <begin position="320"/>
        <end position="323"/>
    </location>
</feature>
<feature type="sequence variant">
    <original>A</original>
    <variation>V</variation>
    <location>
        <position position="33"/>
    </location>
</feature>
<feature type="sequence variant">
    <original>N</original>
    <variation>K</variation>
    <location>
        <position position="42"/>
    </location>
</feature>
<feature type="sequence variant">
    <original>I</original>
    <variation>S</variation>
    <location>
        <position position="46"/>
    </location>
</feature>
<feature type="sequence variant">
    <original>S</original>
    <variation>P</variation>
    <location>
        <position position="64"/>
    </location>
</feature>
<feature type="sequence variant">
    <original>T</original>
    <variation>R</variation>
    <location>
        <position position="76"/>
    </location>
</feature>
<feature type="sequence variant">
    <original>G</original>
    <variation>R</variation>
    <location>
        <position position="162"/>
    </location>
</feature>
<feature type="sequence variant">
    <original>K</original>
    <variation>I</variation>
    <location>
        <position position="247"/>
    </location>
</feature>
<feature type="sequence variant">
    <original>K</original>
    <variation>R</variation>
    <location>
        <position position="290"/>
    </location>
</feature>
<feature type="sequence variant">
    <original>K</original>
    <variation>T</variation>
    <location>
        <position position="332"/>
    </location>
</feature>
<feature type="sequence variant">
    <original>R</original>
    <variation>K</variation>
    <location>
        <position position="345"/>
    </location>
</feature>
<feature type="sequence variant">
    <original>H</original>
    <variation>Q</variation>
    <location>
        <position position="369"/>
    </location>
</feature>
<feature type="sequence variant">
    <original>Y</original>
    <variation>D</variation>
    <location>
        <position position="391"/>
    </location>
</feature>
<feature type="sequence variant">
    <original>A</original>
    <variation>S</variation>
    <location>
        <position position="402"/>
    </location>
</feature>